<sequence>MTNLTLALDAMGGDYGPRITVPAALQALRLYSFLNFYLVGNKTDIEKYLSQVESDVLRRIEIIHTTEVVTMSDRPAHALRNRKQSSMRLAIELVRDGKAQACLSAGNTGALMAMSKVLLKTLPGIDRPALVSCLPAVNKTPVYLLDLGANVSCCSETLFQFAVMGSVLCEAVDKNCSPKVALLNVGIEEIKGNDQVQQAGQLLQQSPQINYTGFIEGNDLFSGRVDVIVCDGFVGNITLKTSEGIARLLVHQLEKGLTKGFFVRLMAKMIAPRINSVLNQMNPDHYNGASLIGLRGIVVKSHGSADESAYLQAISLAVTEAQRRLPQMIEERLESILLDINN</sequence>
<gene>
    <name evidence="1" type="primary">plsX</name>
    <name type="ordered locus">Ssed_2627</name>
</gene>
<accession>A8FWL1</accession>
<protein>
    <recommendedName>
        <fullName evidence="1">Phosphate acyltransferase</fullName>
        <ecNumber evidence="1">2.3.1.274</ecNumber>
    </recommendedName>
    <alternativeName>
        <fullName evidence="1">Acyl-ACP phosphotransacylase</fullName>
    </alternativeName>
    <alternativeName>
        <fullName evidence="1">Acyl-[acyl-carrier-protein]--phosphate acyltransferase</fullName>
    </alternativeName>
    <alternativeName>
        <fullName evidence="1">Phosphate-acyl-ACP acyltransferase</fullName>
    </alternativeName>
</protein>
<proteinExistence type="inferred from homology"/>
<name>PLSX_SHESH</name>
<keyword id="KW-0963">Cytoplasm</keyword>
<keyword id="KW-0444">Lipid biosynthesis</keyword>
<keyword id="KW-0443">Lipid metabolism</keyword>
<keyword id="KW-0594">Phospholipid biosynthesis</keyword>
<keyword id="KW-1208">Phospholipid metabolism</keyword>
<keyword id="KW-1185">Reference proteome</keyword>
<keyword id="KW-0808">Transferase</keyword>
<feature type="chain" id="PRO_1000074174" description="Phosphate acyltransferase">
    <location>
        <begin position="1"/>
        <end position="342"/>
    </location>
</feature>
<dbReference type="EC" id="2.3.1.274" evidence="1"/>
<dbReference type="EMBL" id="CP000821">
    <property type="protein sequence ID" value="ABV37234.1"/>
    <property type="molecule type" value="Genomic_DNA"/>
</dbReference>
<dbReference type="RefSeq" id="WP_012142965.1">
    <property type="nucleotide sequence ID" value="NC_009831.1"/>
</dbReference>
<dbReference type="SMR" id="A8FWL1"/>
<dbReference type="STRING" id="425104.Ssed_2627"/>
<dbReference type="KEGG" id="sse:Ssed_2627"/>
<dbReference type="eggNOG" id="COG0416">
    <property type="taxonomic scope" value="Bacteria"/>
</dbReference>
<dbReference type="HOGENOM" id="CLU_039379_1_0_6"/>
<dbReference type="OrthoDB" id="9806408at2"/>
<dbReference type="UniPathway" id="UPA00085"/>
<dbReference type="Proteomes" id="UP000002015">
    <property type="component" value="Chromosome"/>
</dbReference>
<dbReference type="GO" id="GO:0005737">
    <property type="term" value="C:cytoplasm"/>
    <property type="evidence" value="ECO:0007669"/>
    <property type="project" value="UniProtKB-SubCell"/>
</dbReference>
<dbReference type="GO" id="GO:0043811">
    <property type="term" value="F:phosphate:acyl-[acyl carrier protein] acyltransferase activity"/>
    <property type="evidence" value="ECO:0007669"/>
    <property type="project" value="UniProtKB-UniRule"/>
</dbReference>
<dbReference type="GO" id="GO:0006633">
    <property type="term" value="P:fatty acid biosynthetic process"/>
    <property type="evidence" value="ECO:0007669"/>
    <property type="project" value="UniProtKB-UniRule"/>
</dbReference>
<dbReference type="GO" id="GO:0008654">
    <property type="term" value="P:phospholipid biosynthetic process"/>
    <property type="evidence" value="ECO:0007669"/>
    <property type="project" value="UniProtKB-KW"/>
</dbReference>
<dbReference type="Gene3D" id="3.40.718.10">
    <property type="entry name" value="Isopropylmalate Dehydrogenase"/>
    <property type="match status" value="1"/>
</dbReference>
<dbReference type="HAMAP" id="MF_00019">
    <property type="entry name" value="PlsX"/>
    <property type="match status" value="1"/>
</dbReference>
<dbReference type="InterPro" id="IPR003664">
    <property type="entry name" value="FA_synthesis"/>
</dbReference>
<dbReference type="InterPro" id="IPR012281">
    <property type="entry name" value="Phospholipid_synth_PlsX-like"/>
</dbReference>
<dbReference type="NCBIfam" id="TIGR00182">
    <property type="entry name" value="plsX"/>
    <property type="match status" value="1"/>
</dbReference>
<dbReference type="PANTHER" id="PTHR30100">
    <property type="entry name" value="FATTY ACID/PHOSPHOLIPID SYNTHESIS PROTEIN PLSX"/>
    <property type="match status" value="1"/>
</dbReference>
<dbReference type="PANTHER" id="PTHR30100:SF1">
    <property type="entry name" value="PHOSPHATE ACYLTRANSFERASE"/>
    <property type="match status" value="1"/>
</dbReference>
<dbReference type="Pfam" id="PF02504">
    <property type="entry name" value="FA_synthesis"/>
    <property type="match status" value="1"/>
</dbReference>
<dbReference type="PIRSF" id="PIRSF002465">
    <property type="entry name" value="Phsphlp_syn_PlsX"/>
    <property type="match status" value="1"/>
</dbReference>
<dbReference type="SUPFAM" id="SSF53659">
    <property type="entry name" value="Isocitrate/Isopropylmalate dehydrogenase-like"/>
    <property type="match status" value="1"/>
</dbReference>
<reference key="1">
    <citation type="submission" date="2007-08" db="EMBL/GenBank/DDBJ databases">
        <title>Complete sequence of Shewanella sediminis HAW-EB3.</title>
        <authorList>
            <consortium name="US DOE Joint Genome Institute"/>
            <person name="Copeland A."/>
            <person name="Lucas S."/>
            <person name="Lapidus A."/>
            <person name="Barry K."/>
            <person name="Glavina del Rio T."/>
            <person name="Dalin E."/>
            <person name="Tice H."/>
            <person name="Pitluck S."/>
            <person name="Chertkov O."/>
            <person name="Brettin T."/>
            <person name="Bruce D."/>
            <person name="Detter J.C."/>
            <person name="Han C."/>
            <person name="Schmutz J."/>
            <person name="Larimer F."/>
            <person name="Land M."/>
            <person name="Hauser L."/>
            <person name="Kyrpides N."/>
            <person name="Kim E."/>
            <person name="Zhao J.-S."/>
            <person name="Richardson P."/>
        </authorList>
    </citation>
    <scope>NUCLEOTIDE SEQUENCE [LARGE SCALE GENOMIC DNA]</scope>
    <source>
        <strain>HAW-EB3</strain>
    </source>
</reference>
<organism>
    <name type="scientific">Shewanella sediminis (strain HAW-EB3)</name>
    <dbReference type="NCBI Taxonomy" id="425104"/>
    <lineage>
        <taxon>Bacteria</taxon>
        <taxon>Pseudomonadati</taxon>
        <taxon>Pseudomonadota</taxon>
        <taxon>Gammaproteobacteria</taxon>
        <taxon>Alteromonadales</taxon>
        <taxon>Shewanellaceae</taxon>
        <taxon>Shewanella</taxon>
    </lineage>
</organism>
<comment type="function">
    <text evidence="1">Catalyzes the reversible formation of acyl-phosphate (acyl-PO(4)) from acyl-[acyl-carrier-protein] (acyl-ACP). This enzyme utilizes acyl-ACP as fatty acyl donor, but not acyl-CoA.</text>
</comment>
<comment type="catalytic activity">
    <reaction evidence="1">
        <text>a fatty acyl-[ACP] + phosphate = an acyl phosphate + holo-[ACP]</text>
        <dbReference type="Rhea" id="RHEA:42292"/>
        <dbReference type="Rhea" id="RHEA-COMP:9685"/>
        <dbReference type="Rhea" id="RHEA-COMP:14125"/>
        <dbReference type="ChEBI" id="CHEBI:43474"/>
        <dbReference type="ChEBI" id="CHEBI:59918"/>
        <dbReference type="ChEBI" id="CHEBI:64479"/>
        <dbReference type="ChEBI" id="CHEBI:138651"/>
        <dbReference type="EC" id="2.3.1.274"/>
    </reaction>
</comment>
<comment type="pathway">
    <text evidence="1">Lipid metabolism; phospholipid metabolism.</text>
</comment>
<comment type="subunit">
    <text evidence="1">Homodimer. Probably interacts with PlsY.</text>
</comment>
<comment type="subcellular location">
    <subcellularLocation>
        <location evidence="1">Cytoplasm</location>
    </subcellularLocation>
    <text evidence="1">Associated with the membrane possibly through PlsY.</text>
</comment>
<comment type="similarity">
    <text evidence="1">Belongs to the PlsX family.</text>
</comment>
<evidence type="ECO:0000255" key="1">
    <source>
        <dbReference type="HAMAP-Rule" id="MF_00019"/>
    </source>
</evidence>